<name>CYCM_RICBR</name>
<keyword id="KW-1003">Cell membrane</keyword>
<keyword id="KW-0249">Electron transport</keyword>
<keyword id="KW-0349">Heme</keyword>
<keyword id="KW-0408">Iron</keyword>
<keyword id="KW-0472">Membrane</keyword>
<keyword id="KW-0479">Metal-binding</keyword>
<keyword id="KW-0735">Signal-anchor</keyword>
<keyword id="KW-0812">Transmembrane</keyword>
<keyword id="KW-1133">Transmembrane helix</keyword>
<keyword id="KW-0813">Transport</keyword>
<feature type="chain" id="PRO_0000288755" description="Cytochrome c homolog">
    <location>
        <begin position="1"/>
        <end position="173"/>
    </location>
</feature>
<feature type="topological domain" description="Cytoplasmic" evidence="2">
    <location>
        <begin position="1"/>
        <end position="8"/>
    </location>
</feature>
<feature type="transmembrane region" description="Helical; Signal-anchor" evidence="2">
    <location>
        <begin position="9"/>
        <end position="29"/>
    </location>
</feature>
<feature type="topological domain" description="Periplasmic" evidence="2">
    <location>
        <begin position="30"/>
        <end position="173"/>
    </location>
</feature>
<feature type="binding site" description="covalent" evidence="3">
    <location>
        <position position="82"/>
    </location>
    <ligand>
        <name>heme c</name>
        <dbReference type="ChEBI" id="CHEBI:61717"/>
    </ligand>
</feature>
<feature type="binding site" description="covalent" evidence="3">
    <location>
        <position position="85"/>
    </location>
    <ligand>
        <name>heme c</name>
        <dbReference type="ChEBI" id="CHEBI:61717"/>
    </ligand>
</feature>
<feature type="binding site" description="axial binding residue" evidence="3">
    <location>
        <position position="86"/>
    </location>
    <ligand>
        <name>heme c</name>
        <dbReference type="ChEBI" id="CHEBI:61717"/>
    </ligand>
    <ligandPart>
        <name>Fe</name>
        <dbReference type="ChEBI" id="CHEBI:18248"/>
    </ligandPart>
</feature>
<feature type="binding site" description="axial binding residue" evidence="3">
    <location>
        <position position="148"/>
    </location>
    <ligand>
        <name>heme c</name>
        <dbReference type="ChEBI" id="CHEBI:61717"/>
    </ligand>
    <ligandPart>
        <name>Fe</name>
        <dbReference type="ChEBI" id="CHEBI:18248"/>
    </ligandPart>
</feature>
<comment type="function">
    <text evidence="1">May be involved in electron transfer from bc1 complex to aa3.</text>
</comment>
<comment type="subcellular location">
    <subcellularLocation>
        <location evidence="1">Cell membrane</location>
        <topology evidence="1">Single-pass type II membrane protein</topology>
    </subcellularLocation>
</comment>
<comment type="PTM">
    <text evidence="1">Binds 1 heme c group covalently per subunit.</text>
</comment>
<comment type="similarity">
    <text evidence="4">Belongs to the cytochrome c family.</text>
</comment>
<reference key="1">
    <citation type="journal article" date="2006" name="PLoS Genet.">
        <title>Genome sequence of Rickettsia bellii illuminates the role of amoebae in gene exchanges between intracellular pathogens.</title>
        <authorList>
            <person name="Ogata H."/>
            <person name="La Scola B."/>
            <person name="Audic S."/>
            <person name="Renesto P."/>
            <person name="Blanc G."/>
            <person name="Robert C."/>
            <person name="Fournier P.-E."/>
            <person name="Claverie J.-M."/>
            <person name="Raoult D."/>
        </authorList>
    </citation>
    <scope>NUCLEOTIDE SEQUENCE [LARGE SCALE GENOMIC DNA]</scope>
    <source>
        <strain>RML369-C</strain>
    </source>
</reference>
<evidence type="ECO:0000250" key="1"/>
<evidence type="ECO:0000255" key="2"/>
<evidence type="ECO:0000255" key="3">
    <source>
        <dbReference type="PROSITE-ProRule" id="PRU00433"/>
    </source>
</evidence>
<evidence type="ECO:0000305" key="4"/>
<organism>
    <name type="scientific">Rickettsia bellii (strain RML369-C)</name>
    <dbReference type="NCBI Taxonomy" id="336407"/>
    <lineage>
        <taxon>Bacteria</taxon>
        <taxon>Pseudomonadati</taxon>
        <taxon>Pseudomonadota</taxon>
        <taxon>Alphaproteobacteria</taxon>
        <taxon>Rickettsiales</taxon>
        <taxon>Rickettsiaceae</taxon>
        <taxon>Rickettsieae</taxon>
        <taxon>Rickettsia</taxon>
        <taxon>belli group</taxon>
    </lineage>
</organism>
<gene>
    <name type="primary">cycM</name>
    <name type="ordered locus">RBE_0956</name>
</gene>
<dbReference type="EMBL" id="CP000087">
    <property type="protein sequence ID" value="ABE05037.1"/>
    <property type="molecule type" value="Genomic_DNA"/>
</dbReference>
<dbReference type="RefSeq" id="WP_011477618.1">
    <property type="nucleotide sequence ID" value="NC_007940.1"/>
</dbReference>
<dbReference type="SMR" id="Q1RHX7"/>
<dbReference type="KEGG" id="rbe:RBE_0956"/>
<dbReference type="eggNOG" id="COG3474">
    <property type="taxonomic scope" value="Bacteria"/>
</dbReference>
<dbReference type="HOGENOM" id="CLU_060944_4_0_5"/>
<dbReference type="OrthoDB" id="9805828at2"/>
<dbReference type="Proteomes" id="UP000001951">
    <property type="component" value="Chromosome"/>
</dbReference>
<dbReference type="GO" id="GO:0005886">
    <property type="term" value="C:plasma membrane"/>
    <property type="evidence" value="ECO:0007669"/>
    <property type="project" value="UniProtKB-SubCell"/>
</dbReference>
<dbReference type="GO" id="GO:0009055">
    <property type="term" value="F:electron transfer activity"/>
    <property type="evidence" value="ECO:0007669"/>
    <property type="project" value="InterPro"/>
</dbReference>
<dbReference type="GO" id="GO:0020037">
    <property type="term" value="F:heme binding"/>
    <property type="evidence" value="ECO:0007669"/>
    <property type="project" value="InterPro"/>
</dbReference>
<dbReference type="GO" id="GO:0046872">
    <property type="term" value="F:metal ion binding"/>
    <property type="evidence" value="ECO:0007669"/>
    <property type="project" value="UniProtKB-KW"/>
</dbReference>
<dbReference type="FunFam" id="1.10.760.10:FF:000026">
    <property type="entry name" value="Cytochrome C, membrane-bound"/>
    <property type="match status" value="1"/>
</dbReference>
<dbReference type="Gene3D" id="1.10.760.10">
    <property type="entry name" value="Cytochrome c-like domain"/>
    <property type="match status" value="1"/>
</dbReference>
<dbReference type="InterPro" id="IPR009056">
    <property type="entry name" value="Cyt_c-like_dom"/>
</dbReference>
<dbReference type="InterPro" id="IPR036909">
    <property type="entry name" value="Cyt_c-like_dom_sf"/>
</dbReference>
<dbReference type="InterPro" id="IPR002327">
    <property type="entry name" value="Cyt_c_1A/1B"/>
</dbReference>
<dbReference type="PANTHER" id="PTHR11961">
    <property type="entry name" value="CYTOCHROME C"/>
    <property type="match status" value="1"/>
</dbReference>
<dbReference type="Pfam" id="PF00034">
    <property type="entry name" value="Cytochrom_C"/>
    <property type="match status" value="1"/>
</dbReference>
<dbReference type="PRINTS" id="PR00604">
    <property type="entry name" value="CYTCHRMECIAB"/>
</dbReference>
<dbReference type="SUPFAM" id="SSF46626">
    <property type="entry name" value="Cytochrome c"/>
    <property type="match status" value="1"/>
</dbReference>
<dbReference type="PROSITE" id="PS51007">
    <property type="entry name" value="CYTC"/>
    <property type="match status" value="1"/>
</dbReference>
<protein>
    <recommendedName>
        <fullName>Cytochrome c homolog</fullName>
    </recommendedName>
</protein>
<sequence>MSGKELNKIVAAILFASLIAMMVGFIANILYKPVLEPKHRGYSIAVQEVSEAPTTQAQAPINIPELMKTANADNGREIAKKCLMCHSLDKDGPNKIGPHLWDVAGRPKASITDYKYSPALSALGGNWDDDSLFAFLHKPSSYAPGTKMSFAGISKPQDIADVILFLKTYVHDK</sequence>
<accession>Q1RHX7</accession>
<proteinExistence type="inferred from homology"/>